<gene>
    <name type="primary">xkdD</name>
    <name type="synonym">ykxD</name>
    <name type="ordered locus">BSU12540</name>
</gene>
<evidence type="ECO:0000305" key="1"/>
<dbReference type="EMBL" id="Z34287">
    <property type="protein sequence ID" value="CAA84045.1"/>
    <property type="molecule type" value="Genomic_DNA"/>
</dbReference>
<dbReference type="EMBL" id="Z70177">
    <property type="protein sequence ID" value="CAA94055.1"/>
    <property type="molecule type" value="Genomic_DNA"/>
</dbReference>
<dbReference type="EMBL" id="AL009126">
    <property type="protein sequence ID" value="CAB13111.1"/>
    <property type="molecule type" value="Genomic_DNA"/>
</dbReference>
<dbReference type="PIR" id="I40412">
    <property type="entry name" value="I40412"/>
</dbReference>
<dbReference type="RefSeq" id="NP_389136.1">
    <property type="nucleotide sequence ID" value="NC_000964.3"/>
</dbReference>
<dbReference type="RefSeq" id="WP_003245290.1">
    <property type="nucleotide sequence ID" value="NZ_OZ025638.1"/>
</dbReference>
<dbReference type="SMR" id="P39783"/>
<dbReference type="FunCoup" id="P39783">
    <property type="interactions" value="152"/>
</dbReference>
<dbReference type="STRING" id="224308.BSU12540"/>
<dbReference type="PaxDb" id="224308-BSU12540"/>
<dbReference type="EnsemblBacteria" id="CAB13111">
    <property type="protein sequence ID" value="CAB13111"/>
    <property type="gene ID" value="BSU_12540"/>
</dbReference>
<dbReference type="GeneID" id="936466"/>
<dbReference type="KEGG" id="bsu:BSU12540"/>
<dbReference type="PATRIC" id="fig|224308.179.peg.1358"/>
<dbReference type="InParanoid" id="P39783"/>
<dbReference type="OrthoDB" id="2905487at2"/>
<dbReference type="BioCyc" id="BSUB:BSU12540-MONOMER"/>
<dbReference type="Proteomes" id="UP000001570">
    <property type="component" value="Chromosome"/>
</dbReference>
<name>XKDD_BACSU</name>
<sequence>MKVLAKTKQAEKSPAPWRAVPCGDTKPIYIYSAYSEEEKERFPYSNGRLIAAVFDLSSYSQKSNASLMAAAPELLEASKAALDFLKGNSIHSKERIIQLLEKAEASAAPKRGGNKT</sequence>
<protein>
    <recommendedName>
        <fullName>Phage-like element PBSX protein XkdD</fullName>
    </recommendedName>
</protein>
<organism>
    <name type="scientific">Bacillus subtilis (strain 168)</name>
    <dbReference type="NCBI Taxonomy" id="224308"/>
    <lineage>
        <taxon>Bacteria</taxon>
        <taxon>Bacillati</taxon>
        <taxon>Bacillota</taxon>
        <taxon>Bacilli</taxon>
        <taxon>Bacillales</taxon>
        <taxon>Bacillaceae</taxon>
        <taxon>Bacillus</taxon>
    </lineage>
</organism>
<reference key="1">
    <citation type="journal article" date="1994" name="J. Bacteriol.">
        <title>Genetic control of bacterial suicide: regulation of the induction of PBSX in Bacillus subtilis.</title>
        <authorList>
            <person name="McDonnell G.E."/>
            <person name="Wood H."/>
            <person name="Devine K.M."/>
            <person name="McConnell D.J."/>
        </authorList>
    </citation>
    <scope>NUCLEOTIDE SEQUENCE [GENOMIC DNA]</scope>
    <source>
        <strain>168 / SO113</strain>
    </source>
</reference>
<reference key="2">
    <citation type="submission" date="1996-03" db="EMBL/GenBank/DDBJ databases">
        <authorList>
            <person name="Krogh S."/>
            <person name="O'Reilly M."/>
            <person name="Nolan N."/>
            <person name="Devine K.M."/>
        </authorList>
    </citation>
    <scope>NUCLEOTIDE SEQUENCE [GENOMIC DNA]</scope>
    <source>
        <strain>168</strain>
    </source>
</reference>
<reference key="3">
    <citation type="journal article" date="1997" name="Nature">
        <title>The complete genome sequence of the Gram-positive bacterium Bacillus subtilis.</title>
        <authorList>
            <person name="Kunst F."/>
            <person name="Ogasawara N."/>
            <person name="Moszer I."/>
            <person name="Albertini A.M."/>
            <person name="Alloni G."/>
            <person name="Azevedo V."/>
            <person name="Bertero M.G."/>
            <person name="Bessieres P."/>
            <person name="Bolotin A."/>
            <person name="Borchert S."/>
            <person name="Borriss R."/>
            <person name="Boursier L."/>
            <person name="Brans A."/>
            <person name="Braun M."/>
            <person name="Brignell S.C."/>
            <person name="Bron S."/>
            <person name="Brouillet S."/>
            <person name="Bruschi C.V."/>
            <person name="Caldwell B."/>
            <person name="Capuano V."/>
            <person name="Carter N.M."/>
            <person name="Choi S.-K."/>
            <person name="Codani J.-J."/>
            <person name="Connerton I.F."/>
            <person name="Cummings N.J."/>
            <person name="Daniel R.A."/>
            <person name="Denizot F."/>
            <person name="Devine K.M."/>
            <person name="Duesterhoeft A."/>
            <person name="Ehrlich S.D."/>
            <person name="Emmerson P.T."/>
            <person name="Entian K.-D."/>
            <person name="Errington J."/>
            <person name="Fabret C."/>
            <person name="Ferrari E."/>
            <person name="Foulger D."/>
            <person name="Fritz C."/>
            <person name="Fujita M."/>
            <person name="Fujita Y."/>
            <person name="Fuma S."/>
            <person name="Galizzi A."/>
            <person name="Galleron N."/>
            <person name="Ghim S.-Y."/>
            <person name="Glaser P."/>
            <person name="Goffeau A."/>
            <person name="Golightly E.J."/>
            <person name="Grandi G."/>
            <person name="Guiseppi G."/>
            <person name="Guy B.J."/>
            <person name="Haga K."/>
            <person name="Haiech J."/>
            <person name="Harwood C.R."/>
            <person name="Henaut A."/>
            <person name="Hilbert H."/>
            <person name="Holsappel S."/>
            <person name="Hosono S."/>
            <person name="Hullo M.-F."/>
            <person name="Itaya M."/>
            <person name="Jones L.-M."/>
            <person name="Joris B."/>
            <person name="Karamata D."/>
            <person name="Kasahara Y."/>
            <person name="Klaerr-Blanchard M."/>
            <person name="Klein C."/>
            <person name="Kobayashi Y."/>
            <person name="Koetter P."/>
            <person name="Koningstein G."/>
            <person name="Krogh S."/>
            <person name="Kumano M."/>
            <person name="Kurita K."/>
            <person name="Lapidus A."/>
            <person name="Lardinois S."/>
            <person name="Lauber J."/>
            <person name="Lazarevic V."/>
            <person name="Lee S.-M."/>
            <person name="Levine A."/>
            <person name="Liu H."/>
            <person name="Masuda S."/>
            <person name="Mauel C."/>
            <person name="Medigue C."/>
            <person name="Medina N."/>
            <person name="Mellado R.P."/>
            <person name="Mizuno M."/>
            <person name="Moestl D."/>
            <person name="Nakai S."/>
            <person name="Noback M."/>
            <person name="Noone D."/>
            <person name="O'Reilly M."/>
            <person name="Ogawa K."/>
            <person name="Ogiwara A."/>
            <person name="Oudega B."/>
            <person name="Park S.-H."/>
            <person name="Parro V."/>
            <person name="Pohl T.M."/>
            <person name="Portetelle D."/>
            <person name="Porwollik S."/>
            <person name="Prescott A.M."/>
            <person name="Presecan E."/>
            <person name="Pujic P."/>
            <person name="Purnelle B."/>
            <person name="Rapoport G."/>
            <person name="Rey M."/>
            <person name="Reynolds S."/>
            <person name="Rieger M."/>
            <person name="Rivolta C."/>
            <person name="Rocha E."/>
            <person name="Roche B."/>
            <person name="Rose M."/>
            <person name="Sadaie Y."/>
            <person name="Sato T."/>
            <person name="Scanlan E."/>
            <person name="Schleich S."/>
            <person name="Schroeter R."/>
            <person name="Scoffone F."/>
            <person name="Sekiguchi J."/>
            <person name="Sekowska A."/>
            <person name="Seror S.J."/>
            <person name="Serror P."/>
            <person name="Shin B.-S."/>
            <person name="Soldo B."/>
            <person name="Sorokin A."/>
            <person name="Tacconi E."/>
            <person name="Takagi T."/>
            <person name="Takahashi H."/>
            <person name="Takemaru K."/>
            <person name="Takeuchi M."/>
            <person name="Tamakoshi A."/>
            <person name="Tanaka T."/>
            <person name="Terpstra P."/>
            <person name="Tognoni A."/>
            <person name="Tosato V."/>
            <person name="Uchiyama S."/>
            <person name="Vandenbol M."/>
            <person name="Vannier F."/>
            <person name="Vassarotti A."/>
            <person name="Viari A."/>
            <person name="Wambutt R."/>
            <person name="Wedler E."/>
            <person name="Wedler H."/>
            <person name="Weitzenegger T."/>
            <person name="Winters P."/>
            <person name="Wipat A."/>
            <person name="Yamamoto H."/>
            <person name="Yamane K."/>
            <person name="Yasumoto K."/>
            <person name="Yata K."/>
            <person name="Yoshida K."/>
            <person name="Yoshikawa H.-F."/>
            <person name="Zumstein E."/>
            <person name="Yoshikawa H."/>
            <person name="Danchin A."/>
        </authorList>
    </citation>
    <scope>NUCLEOTIDE SEQUENCE [LARGE SCALE GENOMIC DNA]</scope>
    <source>
        <strain>168</strain>
    </source>
</reference>
<keyword id="KW-1185">Reference proteome</keyword>
<feature type="chain" id="PRO_0000066018" description="Phage-like element PBSX protein XkdD">
    <location>
        <begin position="1"/>
        <end position="116"/>
    </location>
</feature>
<feature type="sequence conflict" description="In Ref. 1; CAA84045." evidence="1" ref="1">
    <original>L</original>
    <variation>V</variation>
    <location>
        <position position="82"/>
    </location>
</feature>
<proteinExistence type="predicted"/>
<accession>P39783</accession>